<gene>
    <name type="ordered locus">BCB4264_A0587</name>
</gene>
<sequence length="391" mass="45263">MGEENQPNYTISQENWSLHRKGYDDQQRHQEKVQEAIKNNLPDLVTEESIVMSNGKDVVKIPIRSLDEYKIRYNYDKNKHVGQGNGDSKVGDVVARDGSGGQKQKGPGKGQGAGDAAGEDYYEAEVSILELEQAFFRELELPNLKRKEMDENRIEHVEFNDIRKTGLWGNIDKKRTMISAYKRNAMSGKASFHPIHQEDLKFRTWNEVLKPDSKAVVLAMMDTSGSMGIWEKYMARSFFFWMTRFLRTKYETVDIEFIAHHTEAKVVTEEEFFSKGESGGTICSSVYKKALELIDNKYSPDRYNIYPFHFSDGDNLTSDNARCVKLVEELMKKCNMFGYGEVNQYNRHSTLMSAYKNIKDDNFRYYILKQKADVFHAMKSFFREESGEKMA</sequence>
<comment type="similarity">
    <text evidence="1">Belongs to the UPF0229 family.</text>
</comment>
<name>Y587_BACC4</name>
<proteinExistence type="inferred from homology"/>
<dbReference type="EMBL" id="CP001176">
    <property type="protein sequence ID" value="ACK64000.1"/>
    <property type="molecule type" value="Genomic_DNA"/>
</dbReference>
<dbReference type="RefSeq" id="WP_000503519.1">
    <property type="nucleotide sequence ID" value="NC_011725.1"/>
</dbReference>
<dbReference type="SMR" id="B7H9V9"/>
<dbReference type="KEGG" id="bcb:BCB4264_A0587"/>
<dbReference type="HOGENOM" id="CLU_049702_2_0_9"/>
<dbReference type="Proteomes" id="UP000007096">
    <property type="component" value="Chromosome"/>
</dbReference>
<dbReference type="HAMAP" id="MF_01232">
    <property type="entry name" value="UPF0229"/>
    <property type="match status" value="1"/>
</dbReference>
<dbReference type="InterPro" id="IPR014230">
    <property type="entry name" value="Spore_YhbH"/>
</dbReference>
<dbReference type="InterPro" id="IPR006698">
    <property type="entry name" value="UPF0229"/>
</dbReference>
<dbReference type="NCBIfam" id="TIGR02877">
    <property type="entry name" value="spore_yhbH"/>
    <property type="match status" value="1"/>
</dbReference>
<dbReference type="PANTHER" id="PTHR30510">
    <property type="entry name" value="UPF0229 PROTEIN YEAH"/>
    <property type="match status" value="1"/>
</dbReference>
<dbReference type="PANTHER" id="PTHR30510:SF2">
    <property type="entry name" value="UPF0229 PROTEIN YEAH"/>
    <property type="match status" value="1"/>
</dbReference>
<dbReference type="Pfam" id="PF04285">
    <property type="entry name" value="DUF444"/>
    <property type="match status" value="2"/>
</dbReference>
<organism>
    <name type="scientific">Bacillus cereus (strain B4264)</name>
    <dbReference type="NCBI Taxonomy" id="405532"/>
    <lineage>
        <taxon>Bacteria</taxon>
        <taxon>Bacillati</taxon>
        <taxon>Bacillota</taxon>
        <taxon>Bacilli</taxon>
        <taxon>Bacillales</taxon>
        <taxon>Bacillaceae</taxon>
        <taxon>Bacillus</taxon>
        <taxon>Bacillus cereus group</taxon>
    </lineage>
</organism>
<protein>
    <recommendedName>
        <fullName evidence="1">UPF0229 protein BCB4264_A0587</fullName>
    </recommendedName>
</protein>
<accession>B7H9V9</accession>
<reference key="1">
    <citation type="submission" date="2008-10" db="EMBL/GenBank/DDBJ databases">
        <title>Genome sequence of Bacillus cereus B4264.</title>
        <authorList>
            <person name="Dodson R.J."/>
            <person name="Durkin A.S."/>
            <person name="Rosovitz M.J."/>
            <person name="Rasko D.A."/>
            <person name="Hoffmaster A."/>
            <person name="Ravel J."/>
            <person name="Sutton G."/>
        </authorList>
    </citation>
    <scope>NUCLEOTIDE SEQUENCE [LARGE SCALE GENOMIC DNA]</scope>
    <source>
        <strain>B4264</strain>
    </source>
</reference>
<evidence type="ECO:0000255" key="1">
    <source>
        <dbReference type="HAMAP-Rule" id="MF_01232"/>
    </source>
</evidence>
<evidence type="ECO:0000256" key="2">
    <source>
        <dbReference type="SAM" id="MobiDB-lite"/>
    </source>
</evidence>
<feature type="chain" id="PRO_1000139634" description="UPF0229 protein BCB4264_A0587">
    <location>
        <begin position="1"/>
        <end position="391"/>
    </location>
</feature>
<feature type="region of interest" description="Disordered" evidence="2">
    <location>
        <begin position="1"/>
        <end position="31"/>
    </location>
</feature>
<feature type="region of interest" description="Disordered" evidence="2">
    <location>
        <begin position="80"/>
        <end position="117"/>
    </location>
</feature>
<feature type="compositionally biased region" description="Polar residues" evidence="2">
    <location>
        <begin position="1"/>
        <end position="16"/>
    </location>
</feature>
<feature type="compositionally biased region" description="Basic and acidic residues" evidence="2">
    <location>
        <begin position="21"/>
        <end position="31"/>
    </location>
</feature>
<feature type="compositionally biased region" description="Gly residues" evidence="2">
    <location>
        <begin position="98"/>
        <end position="115"/>
    </location>
</feature>